<reference key="1">
    <citation type="journal article" date="2005" name="Nat. Genet.">
        <title>The complete genome sequence of Francisella tularensis, the causative agent of tularemia.</title>
        <authorList>
            <person name="Larsson P."/>
            <person name="Oyston P.C.F."/>
            <person name="Chain P."/>
            <person name="Chu M.C."/>
            <person name="Duffield M."/>
            <person name="Fuxelius H.-H."/>
            <person name="Garcia E."/>
            <person name="Haelltorp G."/>
            <person name="Johansson D."/>
            <person name="Isherwood K.E."/>
            <person name="Karp P.D."/>
            <person name="Larsson E."/>
            <person name="Liu Y."/>
            <person name="Michell S."/>
            <person name="Prior J."/>
            <person name="Prior R."/>
            <person name="Malfatti S."/>
            <person name="Sjoestedt A."/>
            <person name="Svensson K."/>
            <person name="Thompson N."/>
            <person name="Vergez L."/>
            <person name="Wagg J.K."/>
            <person name="Wren B.W."/>
            <person name="Lindler L.E."/>
            <person name="Andersson S.G.E."/>
            <person name="Forsman M."/>
            <person name="Titball R.W."/>
        </authorList>
    </citation>
    <scope>NUCLEOTIDE SEQUENCE [LARGE SCALE GENOMIC DNA]</scope>
    <source>
        <strain>SCHU S4 / Schu 4</strain>
    </source>
</reference>
<accession>Q5NIC5</accession>
<protein>
    <recommendedName>
        <fullName evidence="1">Ribosome maturation factor RimM</fullName>
    </recommendedName>
</protein>
<gene>
    <name evidence="1" type="primary">rimM</name>
    <name type="ordered locus">FTT_0151</name>
</gene>
<dbReference type="EMBL" id="AJ749949">
    <property type="protein sequence ID" value="CAG44784.1"/>
    <property type="molecule type" value="Genomic_DNA"/>
</dbReference>
<dbReference type="RefSeq" id="WP_003019921.1">
    <property type="nucleotide sequence ID" value="NC_006570.2"/>
</dbReference>
<dbReference type="RefSeq" id="YP_169217.1">
    <property type="nucleotide sequence ID" value="NC_006570.2"/>
</dbReference>
<dbReference type="SMR" id="Q5NIC5"/>
<dbReference type="STRING" id="177416.FTT_0151"/>
<dbReference type="DNASU" id="3191619"/>
<dbReference type="EnsemblBacteria" id="CAG44784">
    <property type="protein sequence ID" value="CAG44784"/>
    <property type="gene ID" value="FTT_0151"/>
</dbReference>
<dbReference type="KEGG" id="ftu:FTT_0151"/>
<dbReference type="eggNOG" id="COG0806">
    <property type="taxonomic scope" value="Bacteria"/>
</dbReference>
<dbReference type="OrthoDB" id="9783509at2"/>
<dbReference type="Proteomes" id="UP000001174">
    <property type="component" value="Chromosome"/>
</dbReference>
<dbReference type="GO" id="GO:0005737">
    <property type="term" value="C:cytoplasm"/>
    <property type="evidence" value="ECO:0007669"/>
    <property type="project" value="UniProtKB-SubCell"/>
</dbReference>
<dbReference type="GO" id="GO:0005840">
    <property type="term" value="C:ribosome"/>
    <property type="evidence" value="ECO:0007669"/>
    <property type="project" value="InterPro"/>
</dbReference>
<dbReference type="GO" id="GO:0043022">
    <property type="term" value="F:ribosome binding"/>
    <property type="evidence" value="ECO:0007669"/>
    <property type="project" value="InterPro"/>
</dbReference>
<dbReference type="GO" id="GO:0042274">
    <property type="term" value="P:ribosomal small subunit biogenesis"/>
    <property type="evidence" value="ECO:0007669"/>
    <property type="project" value="UniProtKB-UniRule"/>
</dbReference>
<dbReference type="GO" id="GO:0006364">
    <property type="term" value="P:rRNA processing"/>
    <property type="evidence" value="ECO:0007669"/>
    <property type="project" value="UniProtKB-UniRule"/>
</dbReference>
<dbReference type="Gene3D" id="2.30.30.240">
    <property type="entry name" value="PRC-barrel domain"/>
    <property type="match status" value="1"/>
</dbReference>
<dbReference type="Gene3D" id="2.40.30.60">
    <property type="entry name" value="RimM"/>
    <property type="match status" value="1"/>
</dbReference>
<dbReference type="HAMAP" id="MF_00014">
    <property type="entry name" value="Ribosome_mat_RimM"/>
    <property type="match status" value="1"/>
</dbReference>
<dbReference type="InterPro" id="IPR011033">
    <property type="entry name" value="PRC_barrel-like_sf"/>
</dbReference>
<dbReference type="InterPro" id="IPR056792">
    <property type="entry name" value="PRC_RimM"/>
</dbReference>
<dbReference type="InterPro" id="IPR011961">
    <property type="entry name" value="RimM"/>
</dbReference>
<dbReference type="InterPro" id="IPR002676">
    <property type="entry name" value="RimM_N"/>
</dbReference>
<dbReference type="InterPro" id="IPR036976">
    <property type="entry name" value="RimM_N_sf"/>
</dbReference>
<dbReference type="InterPro" id="IPR009000">
    <property type="entry name" value="Transl_B-barrel_sf"/>
</dbReference>
<dbReference type="NCBIfam" id="TIGR02273">
    <property type="entry name" value="16S_RimM"/>
    <property type="match status" value="1"/>
</dbReference>
<dbReference type="NCBIfam" id="NF011185">
    <property type="entry name" value="PRK14591.1"/>
    <property type="match status" value="1"/>
</dbReference>
<dbReference type="PANTHER" id="PTHR33692">
    <property type="entry name" value="RIBOSOME MATURATION FACTOR RIMM"/>
    <property type="match status" value="1"/>
</dbReference>
<dbReference type="PANTHER" id="PTHR33692:SF1">
    <property type="entry name" value="RIBOSOME MATURATION FACTOR RIMM"/>
    <property type="match status" value="1"/>
</dbReference>
<dbReference type="Pfam" id="PF24986">
    <property type="entry name" value="PRC_RimM"/>
    <property type="match status" value="1"/>
</dbReference>
<dbReference type="Pfam" id="PF01782">
    <property type="entry name" value="RimM"/>
    <property type="match status" value="1"/>
</dbReference>
<dbReference type="SUPFAM" id="SSF50346">
    <property type="entry name" value="PRC-barrel domain"/>
    <property type="match status" value="1"/>
</dbReference>
<dbReference type="SUPFAM" id="SSF50447">
    <property type="entry name" value="Translation proteins"/>
    <property type="match status" value="1"/>
</dbReference>
<sequence length="169" mass="19181">MSQDFVEIAKIGATYKLNGELNLYPLANSIETLLSYGDWYIQLPATNVWQQLKGESVLKRADKVYIKLANINNADTAKKYVNALIGVPKRALPQLAEDEVYFKDLIGCSVKNINNDSFGVVVDIIETDANEVLVCKEDNSEYLIPYVKQYIVSEDLNSKKIVVDWEYDY</sequence>
<name>RIMM_FRATT</name>
<evidence type="ECO:0000255" key="1">
    <source>
        <dbReference type="HAMAP-Rule" id="MF_00014"/>
    </source>
</evidence>
<comment type="function">
    <text evidence="1">An accessory protein needed during the final step in the assembly of 30S ribosomal subunit, possibly for assembly of the head region. Essential for efficient processing of 16S rRNA. May be needed both before and after RbfA during the maturation of 16S rRNA. It has affinity for free ribosomal 30S subunits but not for 70S ribosomes.</text>
</comment>
<comment type="subunit">
    <text evidence="1">Binds ribosomal protein uS19.</text>
</comment>
<comment type="subcellular location">
    <subcellularLocation>
        <location evidence="1">Cytoplasm</location>
    </subcellularLocation>
</comment>
<comment type="domain">
    <text evidence="1">The PRC barrel domain binds ribosomal protein uS19.</text>
</comment>
<comment type="similarity">
    <text evidence="1">Belongs to the RimM family.</text>
</comment>
<proteinExistence type="inferred from homology"/>
<feature type="chain" id="PRO_0000163291" description="Ribosome maturation factor RimM">
    <location>
        <begin position="1"/>
        <end position="169"/>
    </location>
</feature>
<feature type="domain" description="PRC barrel" evidence="1">
    <location>
        <begin position="97"/>
        <end position="169"/>
    </location>
</feature>
<keyword id="KW-0143">Chaperone</keyword>
<keyword id="KW-0963">Cytoplasm</keyword>
<keyword id="KW-1185">Reference proteome</keyword>
<keyword id="KW-0690">Ribosome biogenesis</keyword>
<keyword id="KW-0698">rRNA processing</keyword>
<organism>
    <name type="scientific">Francisella tularensis subsp. tularensis (strain SCHU S4 / Schu 4)</name>
    <dbReference type="NCBI Taxonomy" id="177416"/>
    <lineage>
        <taxon>Bacteria</taxon>
        <taxon>Pseudomonadati</taxon>
        <taxon>Pseudomonadota</taxon>
        <taxon>Gammaproteobacteria</taxon>
        <taxon>Thiotrichales</taxon>
        <taxon>Francisellaceae</taxon>
        <taxon>Francisella</taxon>
    </lineage>
</organism>